<keyword id="KW-0249">Electron transport</keyword>
<keyword id="KW-0349">Heme</keyword>
<keyword id="KW-0408">Iron</keyword>
<keyword id="KW-0472">Membrane</keyword>
<keyword id="KW-0479">Metal-binding</keyword>
<keyword id="KW-0496">Mitochondrion</keyword>
<keyword id="KW-0999">Mitochondrion inner membrane</keyword>
<keyword id="KW-0679">Respiratory chain</keyword>
<keyword id="KW-0812">Transmembrane</keyword>
<keyword id="KW-1133">Transmembrane helix</keyword>
<keyword id="KW-0813">Transport</keyword>
<keyword id="KW-0830">Ubiquinone</keyword>
<gene>
    <name type="primary">MT-CYB</name>
    <name type="synonym">COB</name>
    <name type="synonym">CYTB</name>
    <name type="synonym">MTCYB</name>
</gene>
<sequence>MTNIRKSHPLLKIVNDSFIDLPTPSSISAWWNFGSLLGICLALQILTGLFLAMHYTSDTATAFSSVTHICRDVNYGWVLRYLHANGASMFFICLYLHVGRGLYYGSYLYKETWNVGVILLFAVMATAFMGYVLPWGQMSFWGATVITNLLSAIPYIGTSLVEWIWGGFSVDKATLTRFFAFHFLLPFITSAMVMVHLLFLHETGSNNPTGIPSNADMIPFHPYYTIKDILGLFMMITALLALVLFAPDMLGDPDNYMPANPLSTPPHIKPEWYFLFAYAILRSIPNKLGGVLALVVSILILIIIPLLHTSKQRSMTFRPISQCLFWLLVADLLTLTWIGGQPVEYPYVIIGQLASVLYFSIIIVFMPLVGLMENYLLKW</sequence>
<name>CYB_CNESE</name>
<accession>O21159</accession>
<accession>O21158</accession>
<accession>Q957C5</accession>
<dbReference type="EMBL" id="AF376837">
    <property type="protein sequence ID" value="AAK57656.1"/>
    <property type="molecule type" value="Genomic_DNA"/>
</dbReference>
<dbReference type="EMBL" id="U95511">
    <property type="protein sequence ID" value="AAC48748.1"/>
    <property type="molecule type" value="Genomic_DNA"/>
</dbReference>
<dbReference type="EMBL" id="U95512">
    <property type="protein sequence ID" value="AAC48749.1"/>
    <property type="molecule type" value="Genomic_DNA"/>
</dbReference>
<dbReference type="SMR" id="O21159"/>
<dbReference type="GO" id="GO:0005743">
    <property type="term" value="C:mitochondrial inner membrane"/>
    <property type="evidence" value="ECO:0007669"/>
    <property type="project" value="UniProtKB-SubCell"/>
</dbReference>
<dbReference type="GO" id="GO:0045275">
    <property type="term" value="C:respiratory chain complex III"/>
    <property type="evidence" value="ECO:0007669"/>
    <property type="project" value="InterPro"/>
</dbReference>
<dbReference type="GO" id="GO:0046872">
    <property type="term" value="F:metal ion binding"/>
    <property type="evidence" value="ECO:0007669"/>
    <property type="project" value="UniProtKB-KW"/>
</dbReference>
<dbReference type="GO" id="GO:0008121">
    <property type="term" value="F:ubiquinol-cytochrome-c reductase activity"/>
    <property type="evidence" value="ECO:0007669"/>
    <property type="project" value="InterPro"/>
</dbReference>
<dbReference type="GO" id="GO:0006122">
    <property type="term" value="P:mitochondrial electron transport, ubiquinol to cytochrome c"/>
    <property type="evidence" value="ECO:0007669"/>
    <property type="project" value="TreeGrafter"/>
</dbReference>
<dbReference type="CDD" id="cd00290">
    <property type="entry name" value="cytochrome_b_C"/>
    <property type="match status" value="1"/>
</dbReference>
<dbReference type="CDD" id="cd00284">
    <property type="entry name" value="Cytochrome_b_N"/>
    <property type="match status" value="1"/>
</dbReference>
<dbReference type="FunFam" id="1.20.810.10:FF:000002">
    <property type="entry name" value="Cytochrome b"/>
    <property type="match status" value="1"/>
</dbReference>
<dbReference type="Gene3D" id="1.20.810.10">
    <property type="entry name" value="Cytochrome Bc1 Complex, Chain C"/>
    <property type="match status" value="1"/>
</dbReference>
<dbReference type="InterPro" id="IPR005798">
    <property type="entry name" value="Cyt_b/b6_C"/>
</dbReference>
<dbReference type="InterPro" id="IPR036150">
    <property type="entry name" value="Cyt_b/b6_C_sf"/>
</dbReference>
<dbReference type="InterPro" id="IPR005797">
    <property type="entry name" value="Cyt_b/b6_N"/>
</dbReference>
<dbReference type="InterPro" id="IPR027387">
    <property type="entry name" value="Cytb/b6-like_sf"/>
</dbReference>
<dbReference type="InterPro" id="IPR030689">
    <property type="entry name" value="Cytochrome_b"/>
</dbReference>
<dbReference type="InterPro" id="IPR048260">
    <property type="entry name" value="Cytochrome_b_C_euk/bac"/>
</dbReference>
<dbReference type="InterPro" id="IPR048259">
    <property type="entry name" value="Cytochrome_b_N_euk/bac"/>
</dbReference>
<dbReference type="InterPro" id="IPR016174">
    <property type="entry name" value="Di-haem_cyt_TM"/>
</dbReference>
<dbReference type="PANTHER" id="PTHR19271">
    <property type="entry name" value="CYTOCHROME B"/>
    <property type="match status" value="1"/>
</dbReference>
<dbReference type="PANTHER" id="PTHR19271:SF16">
    <property type="entry name" value="CYTOCHROME B"/>
    <property type="match status" value="1"/>
</dbReference>
<dbReference type="Pfam" id="PF00032">
    <property type="entry name" value="Cytochrom_B_C"/>
    <property type="match status" value="1"/>
</dbReference>
<dbReference type="Pfam" id="PF00033">
    <property type="entry name" value="Cytochrome_B"/>
    <property type="match status" value="1"/>
</dbReference>
<dbReference type="PIRSF" id="PIRSF038885">
    <property type="entry name" value="COB"/>
    <property type="match status" value="1"/>
</dbReference>
<dbReference type="SUPFAM" id="SSF81648">
    <property type="entry name" value="a domain/subunit of cytochrome bc1 complex (Ubiquinol-cytochrome c reductase)"/>
    <property type="match status" value="1"/>
</dbReference>
<dbReference type="SUPFAM" id="SSF81342">
    <property type="entry name" value="Transmembrane di-heme cytochromes"/>
    <property type="match status" value="1"/>
</dbReference>
<dbReference type="PROSITE" id="PS51003">
    <property type="entry name" value="CYTB_CTER"/>
    <property type="match status" value="1"/>
</dbReference>
<dbReference type="PROSITE" id="PS51002">
    <property type="entry name" value="CYTB_NTER"/>
    <property type="match status" value="1"/>
</dbReference>
<protein>
    <recommendedName>
        <fullName>Cytochrome b</fullName>
    </recommendedName>
    <alternativeName>
        <fullName>Complex III subunit 3</fullName>
    </alternativeName>
    <alternativeName>
        <fullName>Complex III subunit III</fullName>
    </alternativeName>
    <alternativeName>
        <fullName>Cytochrome b-c1 complex subunit 3</fullName>
    </alternativeName>
    <alternativeName>
        <fullName>Ubiquinol-cytochrome-c reductase complex cytochrome b subunit</fullName>
    </alternativeName>
</protein>
<geneLocation type="mitochondrion"/>
<reference key="1">
    <citation type="journal article" date="2001" name="Mol. Phylogenet. Evol.">
        <title>Molecular systematics of bats of the genus Myotis (Vespertilionidae) suggests deterministic ecomorphological convergences.</title>
        <authorList>
            <person name="Ruedi M."/>
            <person name="Mayer F."/>
        </authorList>
    </citation>
    <scope>NUCLEOTIDE SEQUENCE [GENOMIC DNA]</scope>
    <source>
        <strain>Isolate ER 659</strain>
    </source>
</reference>
<reference key="2">
    <citation type="journal article" date="1997" name="Nature">
        <title>DNA answers the call of pipistrelle bat species.</title>
        <authorList>
            <person name="Barratt E.M."/>
            <person name="Deaville R."/>
            <person name="Burland T.M."/>
            <person name="Bruford M.W."/>
            <person name="Jones G."/>
            <person name="Racey P.A."/>
            <person name="Wayne R.K."/>
        </authorList>
    </citation>
    <scope>NUCLEOTIDE SEQUENCE [GENOMIC DNA] OF 9-119 AND 282-379</scope>
</reference>
<proteinExistence type="inferred from homology"/>
<feature type="chain" id="PRO_0000060937" description="Cytochrome b">
    <location>
        <begin position="1"/>
        <end position="379"/>
    </location>
</feature>
<feature type="transmembrane region" description="Helical" evidence="2">
    <location>
        <begin position="33"/>
        <end position="53"/>
    </location>
</feature>
<feature type="transmembrane region" description="Helical" evidence="2">
    <location>
        <begin position="77"/>
        <end position="98"/>
    </location>
</feature>
<feature type="transmembrane region" description="Helical" evidence="2">
    <location>
        <begin position="113"/>
        <end position="133"/>
    </location>
</feature>
<feature type="transmembrane region" description="Helical" evidence="2">
    <location>
        <begin position="178"/>
        <end position="198"/>
    </location>
</feature>
<feature type="transmembrane region" description="Helical" evidence="2">
    <location>
        <begin position="226"/>
        <end position="246"/>
    </location>
</feature>
<feature type="transmembrane region" description="Helical" evidence="2">
    <location>
        <begin position="288"/>
        <end position="308"/>
    </location>
</feature>
<feature type="transmembrane region" description="Helical" evidence="2">
    <location>
        <begin position="320"/>
        <end position="340"/>
    </location>
</feature>
<feature type="transmembrane region" description="Helical" evidence="2">
    <location>
        <begin position="347"/>
        <end position="367"/>
    </location>
</feature>
<feature type="binding site" description="axial binding residue" evidence="2">
    <location>
        <position position="83"/>
    </location>
    <ligand>
        <name>heme b</name>
        <dbReference type="ChEBI" id="CHEBI:60344"/>
        <label>b562</label>
    </ligand>
    <ligandPart>
        <name>Fe</name>
        <dbReference type="ChEBI" id="CHEBI:18248"/>
    </ligandPart>
</feature>
<feature type="binding site" description="axial binding residue" evidence="2">
    <location>
        <position position="97"/>
    </location>
    <ligand>
        <name>heme b</name>
        <dbReference type="ChEBI" id="CHEBI:60344"/>
        <label>b566</label>
    </ligand>
    <ligandPart>
        <name>Fe</name>
        <dbReference type="ChEBI" id="CHEBI:18248"/>
    </ligandPart>
</feature>
<feature type="binding site" description="axial binding residue" evidence="2">
    <location>
        <position position="182"/>
    </location>
    <ligand>
        <name>heme b</name>
        <dbReference type="ChEBI" id="CHEBI:60344"/>
        <label>b562</label>
    </ligand>
    <ligandPart>
        <name>Fe</name>
        <dbReference type="ChEBI" id="CHEBI:18248"/>
    </ligandPart>
</feature>
<feature type="binding site" description="axial binding residue" evidence="2">
    <location>
        <position position="196"/>
    </location>
    <ligand>
        <name>heme b</name>
        <dbReference type="ChEBI" id="CHEBI:60344"/>
        <label>b566</label>
    </ligand>
    <ligandPart>
        <name>Fe</name>
        <dbReference type="ChEBI" id="CHEBI:18248"/>
    </ligandPart>
</feature>
<feature type="binding site" evidence="2">
    <location>
        <position position="201"/>
    </location>
    <ligand>
        <name>a ubiquinone</name>
        <dbReference type="ChEBI" id="CHEBI:16389"/>
    </ligand>
</feature>
<feature type="sequence conflict" description="In Ref. 2; AAC48749." evidence="5" ref="2">
    <original>Y</original>
    <variation>H</variation>
    <location>
        <position position="375"/>
    </location>
</feature>
<evidence type="ECO:0000250" key="1"/>
<evidence type="ECO:0000250" key="2">
    <source>
        <dbReference type="UniProtKB" id="P00157"/>
    </source>
</evidence>
<evidence type="ECO:0000255" key="3">
    <source>
        <dbReference type="PROSITE-ProRule" id="PRU00967"/>
    </source>
</evidence>
<evidence type="ECO:0000255" key="4">
    <source>
        <dbReference type="PROSITE-ProRule" id="PRU00968"/>
    </source>
</evidence>
<evidence type="ECO:0000305" key="5"/>
<organism>
    <name type="scientific">Cnephaeus serotinus</name>
    <name type="common">Serotine bat</name>
    <name type="synonym">Eptesicus serotinus</name>
    <dbReference type="NCBI Taxonomy" id="3371021"/>
    <lineage>
        <taxon>Eukaryota</taxon>
        <taxon>Metazoa</taxon>
        <taxon>Chordata</taxon>
        <taxon>Craniata</taxon>
        <taxon>Vertebrata</taxon>
        <taxon>Euteleostomi</taxon>
        <taxon>Mammalia</taxon>
        <taxon>Eutheria</taxon>
        <taxon>Laurasiatheria</taxon>
        <taxon>Chiroptera</taxon>
        <taxon>Yangochiroptera</taxon>
        <taxon>Vespertilionidae</taxon>
        <taxon>Cnephaeus</taxon>
    </lineage>
</organism>
<comment type="function">
    <text evidence="2">Component of the ubiquinol-cytochrome c reductase complex (complex III or cytochrome b-c1 complex) that is part of the mitochondrial respiratory chain. The b-c1 complex mediates electron transfer from ubiquinol to cytochrome c. Contributes to the generation of a proton gradient across the mitochondrial membrane that is then used for ATP synthesis.</text>
</comment>
<comment type="cofactor">
    <cofactor evidence="2">
        <name>heme b</name>
        <dbReference type="ChEBI" id="CHEBI:60344"/>
    </cofactor>
    <text evidence="2">Binds 2 heme b groups non-covalently.</text>
</comment>
<comment type="subunit">
    <text evidence="2">The cytochrome bc1 complex contains 11 subunits: 3 respiratory subunits (MT-CYB, CYC1 and UQCRFS1), 2 core proteins (UQCRC1 and UQCRC2) and 6 low-molecular weight proteins (UQCRH/QCR6, UQCRB/QCR7, UQCRQ/QCR8, UQCR10/QCR9, UQCR11/QCR10 and a cleavage product of UQCRFS1). This cytochrome bc1 complex then forms a dimer.</text>
</comment>
<comment type="subcellular location">
    <subcellularLocation>
        <location evidence="2">Mitochondrion inner membrane</location>
        <topology evidence="2">Multi-pass membrane protein</topology>
    </subcellularLocation>
</comment>
<comment type="miscellaneous">
    <text evidence="1">Heme 1 (or BL or b562) is low-potential and absorbs at about 562 nm, and heme 2 (or BH or b566) is high-potential and absorbs at about 566 nm.</text>
</comment>
<comment type="similarity">
    <text evidence="3 4">Belongs to the cytochrome b family.</text>
</comment>
<comment type="caution">
    <text evidence="2">The full-length protein contains only eight transmembrane helices, not nine as predicted by bioinformatics tools.</text>
</comment>